<evidence type="ECO:0000255" key="1">
    <source>
        <dbReference type="HAMAP-Rule" id="MF_00122"/>
    </source>
</evidence>
<accession>A5VUS7</accession>
<name>GATC_BRUO2</name>
<proteinExistence type="inferred from homology"/>
<organism>
    <name type="scientific">Brucella ovis (strain ATCC 25840 / 63/290 / NCTC 10512)</name>
    <dbReference type="NCBI Taxonomy" id="444178"/>
    <lineage>
        <taxon>Bacteria</taxon>
        <taxon>Pseudomonadati</taxon>
        <taxon>Pseudomonadota</taxon>
        <taxon>Alphaproteobacteria</taxon>
        <taxon>Hyphomicrobiales</taxon>
        <taxon>Brucellaceae</taxon>
        <taxon>Brucella/Ochrobactrum group</taxon>
        <taxon>Brucella</taxon>
    </lineage>
</organism>
<dbReference type="EC" id="6.3.5.-" evidence="1"/>
<dbReference type="EMBL" id="CP000709">
    <property type="protein sequence ID" value="ABQ62902.1"/>
    <property type="molecule type" value="Genomic_DNA"/>
</dbReference>
<dbReference type="RefSeq" id="WP_002966038.1">
    <property type="nucleotide sequence ID" value="NC_009504.1"/>
</dbReference>
<dbReference type="SMR" id="A5VUS7"/>
<dbReference type="GeneID" id="97535281"/>
<dbReference type="KEGG" id="bov:BOV_A0560"/>
<dbReference type="HOGENOM" id="CLU_105899_2_0_5"/>
<dbReference type="Proteomes" id="UP000006383">
    <property type="component" value="Chromosome II"/>
</dbReference>
<dbReference type="GO" id="GO:0050566">
    <property type="term" value="F:asparaginyl-tRNA synthase (glutamine-hydrolyzing) activity"/>
    <property type="evidence" value="ECO:0007669"/>
    <property type="project" value="RHEA"/>
</dbReference>
<dbReference type="GO" id="GO:0005524">
    <property type="term" value="F:ATP binding"/>
    <property type="evidence" value="ECO:0007669"/>
    <property type="project" value="UniProtKB-KW"/>
</dbReference>
<dbReference type="GO" id="GO:0050567">
    <property type="term" value="F:glutaminyl-tRNA synthase (glutamine-hydrolyzing) activity"/>
    <property type="evidence" value="ECO:0007669"/>
    <property type="project" value="UniProtKB-UniRule"/>
</dbReference>
<dbReference type="GO" id="GO:0070681">
    <property type="term" value="P:glutaminyl-tRNAGln biosynthesis via transamidation"/>
    <property type="evidence" value="ECO:0007669"/>
    <property type="project" value="TreeGrafter"/>
</dbReference>
<dbReference type="GO" id="GO:0006450">
    <property type="term" value="P:regulation of translational fidelity"/>
    <property type="evidence" value="ECO:0007669"/>
    <property type="project" value="InterPro"/>
</dbReference>
<dbReference type="GO" id="GO:0006412">
    <property type="term" value="P:translation"/>
    <property type="evidence" value="ECO:0007669"/>
    <property type="project" value="UniProtKB-UniRule"/>
</dbReference>
<dbReference type="Gene3D" id="1.10.20.60">
    <property type="entry name" value="Glu-tRNAGln amidotransferase C subunit, N-terminal domain"/>
    <property type="match status" value="1"/>
</dbReference>
<dbReference type="HAMAP" id="MF_00122">
    <property type="entry name" value="GatC"/>
    <property type="match status" value="1"/>
</dbReference>
<dbReference type="InterPro" id="IPR036113">
    <property type="entry name" value="Asp/Glu-ADT_sf_sub_c"/>
</dbReference>
<dbReference type="InterPro" id="IPR003837">
    <property type="entry name" value="GatC"/>
</dbReference>
<dbReference type="NCBIfam" id="TIGR00135">
    <property type="entry name" value="gatC"/>
    <property type="match status" value="1"/>
</dbReference>
<dbReference type="PANTHER" id="PTHR15004">
    <property type="entry name" value="GLUTAMYL-TRNA(GLN) AMIDOTRANSFERASE SUBUNIT C, MITOCHONDRIAL"/>
    <property type="match status" value="1"/>
</dbReference>
<dbReference type="PANTHER" id="PTHR15004:SF0">
    <property type="entry name" value="GLUTAMYL-TRNA(GLN) AMIDOTRANSFERASE SUBUNIT C, MITOCHONDRIAL"/>
    <property type="match status" value="1"/>
</dbReference>
<dbReference type="Pfam" id="PF02686">
    <property type="entry name" value="GatC"/>
    <property type="match status" value="1"/>
</dbReference>
<dbReference type="SUPFAM" id="SSF141000">
    <property type="entry name" value="Glu-tRNAGln amidotransferase C subunit"/>
    <property type="match status" value="1"/>
</dbReference>
<gene>
    <name evidence="1" type="primary">gatC</name>
    <name type="ordered locus">BOV_A0560</name>
</gene>
<keyword id="KW-0067">ATP-binding</keyword>
<keyword id="KW-0436">Ligase</keyword>
<keyword id="KW-0547">Nucleotide-binding</keyword>
<keyword id="KW-0648">Protein biosynthesis</keyword>
<feature type="chain" id="PRO_1000016082" description="Aspartyl/glutamyl-tRNA(Asn/Gln) amidotransferase subunit C">
    <location>
        <begin position="1"/>
        <end position="95"/>
    </location>
</feature>
<sequence>MSVDISTVKRVAHLARIAVSEDDAERMTGELNAILGFVEQLNEVDVEGIEPMTSVTPMKMRMREDKVTDGGIAAAVVANAPVTEDNFFVVPKVVE</sequence>
<reference key="1">
    <citation type="journal article" date="2009" name="PLoS ONE">
        <title>Genome degradation in Brucella ovis corresponds with narrowing of its host range and tissue tropism.</title>
        <authorList>
            <person name="Tsolis R.M."/>
            <person name="Seshadri R."/>
            <person name="Santos R.L."/>
            <person name="Sangari F.J."/>
            <person name="Lobo J.M."/>
            <person name="de Jong M.F."/>
            <person name="Ren Q."/>
            <person name="Myers G."/>
            <person name="Brinkac L.M."/>
            <person name="Nelson W.C."/>
            <person name="Deboy R.T."/>
            <person name="Angiuoli S."/>
            <person name="Khouri H."/>
            <person name="Dimitrov G."/>
            <person name="Robinson J.R."/>
            <person name="Mulligan S."/>
            <person name="Walker R.L."/>
            <person name="Elzer P.E."/>
            <person name="Hassan K.A."/>
            <person name="Paulsen I.T."/>
        </authorList>
    </citation>
    <scope>NUCLEOTIDE SEQUENCE [LARGE SCALE GENOMIC DNA]</scope>
    <source>
        <strain>ATCC 25840 / 63/290 / NCTC 10512</strain>
    </source>
</reference>
<protein>
    <recommendedName>
        <fullName evidence="1">Aspartyl/glutamyl-tRNA(Asn/Gln) amidotransferase subunit C</fullName>
        <shortName evidence="1">Asp/Glu-ADT subunit C</shortName>
        <ecNumber evidence="1">6.3.5.-</ecNumber>
    </recommendedName>
</protein>
<comment type="function">
    <text evidence="1">Allows the formation of correctly charged Asn-tRNA(Asn) or Gln-tRNA(Gln) through the transamidation of misacylated Asp-tRNA(Asn) or Glu-tRNA(Gln) in organisms which lack either or both of asparaginyl-tRNA or glutaminyl-tRNA synthetases. The reaction takes place in the presence of glutamine and ATP through an activated phospho-Asp-tRNA(Asn) or phospho-Glu-tRNA(Gln).</text>
</comment>
<comment type="catalytic activity">
    <reaction evidence="1">
        <text>L-glutamyl-tRNA(Gln) + L-glutamine + ATP + H2O = L-glutaminyl-tRNA(Gln) + L-glutamate + ADP + phosphate + H(+)</text>
        <dbReference type="Rhea" id="RHEA:17521"/>
        <dbReference type="Rhea" id="RHEA-COMP:9681"/>
        <dbReference type="Rhea" id="RHEA-COMP:9684"/>
        <dbReference type="ChEBI" id="CHEBI:15377"/>
        <dbReference type="ChEBI" id="CHEBI:15378"/>
        <dbReference type="ChEBI" id="CHEBI:29985"/>
        <dbReference type="ChEBI" id="CHEBI:30616"/>
        <dbReference type="ChEBI" id="CHEBI:43474"/>
        <dbReference type="ChEBI" id="CHEBI:58359"/>
        <dbReference type="ChEBI" id="CHEBI:78520"/>
        <dbReference type="ChEBI" id="CHEBI:78521"/>
        <dbReference type="ChEBI" id="CHEBI:456216"/>
    </reaction>
</comment>
<comment type="catalytic activity">
    <reaction evidence="1">
        <text>L-aspartyl-tRNA(Asn) + L-glutamine + ATP + H2O = L-asparaginyl-tRNA(Asn) + L-glutamate + ADP + phosphate + 2 H(+)</text>
        <dbReference type="Rhea" id="RHEA:14513"/>
        <dbReference type="Rhea" id="RHEA-COMP:9674"/>
        <dbReference type="Rhea" id="RHEA-COMP:9677"/>
        <dbReference type="ChEBI" id="CHEBI:15377"/>
        <dbReference type="ChEBI" id="CHEBI:15378"/>
        <dbReference type="ChEBI" id="CHEBI:29985"/>
        <dbReference type="ChEBI" id="CHEBI:30616"/>
        <dbReference type="ChEBI" id="CHEBI:43474"/>
        <dbReference type="ChEBI" id="CHEBI:58359"/>
        <dbReference type="ChEBI" id="CHEBI:78515"/>
        <dbReference type="ChEBI" id="CHEBI:78516"/>
        <dbReference type="ChEBI" id="CHEBI:456216"/>
    </reaction>
</comment>
<comment type="subunit">
    <text evidence="1">Heterotrimer of A, B and C subunits.</text>
</comment>
<comment type="similarity">
    <text evidence="1">Belongs to the GatC family.</text>
</comment>